<proteinExistence type="evidence at protein level"/>
<sequence length="164" mass="17247">MIDYSGLRTIFGEKLPESHIFFATVAAHKYVPSYAFLRRELGLSSAHTNRKVWKKFVEAYGKAIPPAPPAPPLTLSKDLTASMSVEEGAALTLSVTATGGTGPYTYAWTKDGSPIPDASGATYTKPTAAAEDAGSYKVTVTDSKQVSKDSTTCAVTVNPTVPGG</sequence>
<evidence type="ECO:0000255" key="1">
    <source>
        <dbReference type="PROSITE-ProRule" id="PRU00114"/>
    </source>
</evidence>
<evidence type="ECO:0000269" key="2">
    <source>
    </source>
</evidence>
<evidence type="ECO:0000269" key="3">
    <source>
    </source>
</evidence>
<evidence type="ECO:0000269" key="4">
    <source>
    </source>
</evidence>
<evidence type="ECO:0000269" key="5">
    <source>
    </source>
</evidence>
<evidence type="ECO:0000303" key="6">
    <source>
    </source>
</evidence>
<evidence type="ECO:0000312" key="7">
    <source>
        <dbReference type="EMBL" id="AAS77190.1"/>
    </source>
</evidence>
<evidence type="ECO:0000312" key="8">
    <source>
        <dbReference type="EMBL" id="AAU05286.1"/>
    </source>
</evidence>
<evidence type="ECO:0000312" key="9">
    <source>
        <dbReference type="EMBL" id="AAX12077.1"/>
    </source>
</evidence>
<evidence type="ECO:0007829" key="10">
    <source>
        <dbReference type="PDB" id="5LXK"/>
    </source>
</evidence>
<evidence type="ECO:0007829" key="11">
    <source>
        <dbReference type="PDB" id="5LXL"/>
    </source>
</evidence>
<reference key="1">
    <citation type="submission" date="2004-01" db="EMBL/GenBank/DDBJ databases">
        <title>Bacteriophage T5 complete genome.</title>
        <authorList>
            <person name="Ksenzenko V.N."/>
            <person name="Kaliman A.V."/>
            <person name="Krutilina A.I."/>
            <person name="Shlyapnikov M.G."/>
        </authorList>
    </citation>
    <scope>NUCLEOTIDE SEQUENCE [LARGE SCALE GENOMIC DNA]</scope>
</reference>
<reference key="2">
    <citation type="journal article" date="2005" name="Virology">
        <title>Complete genome sequence of bacteriophage T5.</title>
        <authorList>
            <person name="Wang J."/>
            <person name="Jiang Y."/>
            <person name="Vincent M."/>
            <person name="Sun Y."/>
            <person name="Yu H."/>
            <person name="Wang J."/>
            <person name="Bao Q."/>
            <person name="Kong H."/>
            <person name="Hu S."/>
        </authorList>
    </citation>
    <scope>NUCLEOTIDE SEQUENCE [LARGE SCALE GENOMIC DNA]</scope>
    <scope>INDUCTION</scope>
    <source>
        <strain evidence="9">ATCC 11303-B5</strain>
    </source>
</reference>
<reference key="3">
    <citation type="journal article" date="2014" name="J. Virol.">
        <title>Insights into bacteriophage T5 structure from analysis of its morphogenesis genes and protein components.</title>
        <authorList>
            <person name="Zivanovic Y."/>
            <person name="Confalonieri F."/>
            <person name="Ponchon L."/>
            <person name="Lurz R."/>
            <person name="Chami M."/>
            <person name="Flayhan A."/>
            <person name="Renouard M."/>
            <person name="Huet A."/>
            <person name="Decottignies P."/>
            <person name="Davidson A.R."/>
            <person name="Breyton C."/>
            <person name="Boulanger P."/>
        </authorList>
    </citation>
    <scope>NUCLEOTIDE SEQUENCE [LARGE SCALE GENOMIC DNA]</scope>
    <scope>SUBCELLULAR LOCATION</scope>
    <source>
        <strain>St0 deletion mutant</strain>
    </source>
</reference>
<reference key="4">
    <citation type="journal article" date="2006" name="J. Mol. Biol.">
        <title>Bacteriophage T5 structure reveals similarities with HK97 and T4 suggesting evolutionary relationships.</title>
        <authorList>
            <person name="Effantin G."/>
            <person name="Boulanger P."/>
            <person name="Neumann E."/>
            <person name="Letellier L."/>
            <person name="Conway J.F."/>
        </authorList>
    </citation>
    <scope>SUBCELLULAR LOCATION</scope>
    <scope>FUNCTION</scope>
</reference>
<reference key="5">
    <citation type="journal article" date="2016" name="J. Mol. Biol.">
        <title>Correct assembly of the bacteriophage T5 procapsid requires both the maturation protease and the portal complex.</title>
        <authorList>
            <person name="Huet A."/>
            <person name="Duda R.L."/>
            <person name="Hendrix R.W."/>
            <person name="Boulanger P."/>
            <person name="Conway J.F."/>
        </authorList>
    </citation>
    <scope>STRUCTURE BY ELECTRON MICROSCOPY (30.0 ANGSTROMS) OF THE CAPSID</scope>
    <scope>FUNCTION</scope>
    <scope>INTERACTION WITH THE MAJOR CAPSID PROTEIN</scope>
</reference>
<reference key="6">
    <citation type="journal article" date="2017" name="Sci. Rep.">
        <title>High affinity anchoring of the decoration protein pb10 onto the bacteriophage T5 capsid.</title>
        <authorList>
            <person name="Vernhes E."/>
            <person name="Renouard M."/>
            <person name="Gilquin B."/>
            <person name="Cuniasse P."/>
            <person name="Durand D."/>
            <person name="England P."/>
            <person name="Hoos S."/>
            <person name="Huet A."/>
            <person name="Conway J.F."/>
            <person name="Glukhov A."/>
            <person name="Ksenzenko V."/>
            <person name="Jacquet E."/>
            <person name="Nhiri N."/>
            <person name="Zinn-Justin S."/>
            <person name="Boulanger P."/>
        </authorList>
    </citation>
    <scope>STRUCTURE BY NMR</scope>
    <scope>INTERACTION WITH THE MAJOR CAPSID PROTEIN</scope>
    <scope>FUNCTION</scope>
    <scope>DOMAIN</scope>
</reference>
<gene>
    <name evidence="8" type="primary">N5</name>
    <name evidence="7" type="ORF">T5.151</name>
    <name evidence="8" type="ORF">T5p147</name>
</gene>
<organism>
    <name type="scientific">Escherichia phage T5</name>
    <name type="common">Enterobacteria phage T5</name>
    <dbReference type="NCBI Taxonomy" id="2695836"/>
    <lineage>
        <taxon>Viruses</taxon>
        <taxon>Duplodnaviria</taxon>
        <taxon>Heunggongvirae</taxon>
        <taxon>Uroviricota</taxon>
        <taxon>Caudoviricetes</taxon>
        <taxon>Demerecviridae</taxon>
        <taxon>Markadamsvirinae</taxon>
        <taxon>Tequintavirus</taxon>
        <taxon>Tequintavirus T5</taxon>
    </lineage>
</organism>
<accession>Q6QGD6</accession>
<keyword id="KW-0002">3D-structure</keyword>
<keyword id="KW-1232">Capsid decoration protein</keyword>
<keyword id="KW-0167">Capsid protein</keyword>
<keyword id="KW-0426">Late protein</keyword>
<keyword id="KW-1185">Reference proteome</keyword>
<keyword id="KW-0946">Virion</keyword>
<dbReference type="EMBL" id="AY543070">
    <property type="protein sequence ID" value="AAS77190.1"/>
    <property type="molecule type" value="Genomic_DNA"/>
</dbReference>
<dbReference type="EMBL" id="AY692264">
    <property type="protein sequence ID" value="AAU05286.1"/>
    <property type="molecule type" value="Genomic_DNA"/>
</dbReference>
<dbReference type="EMBL" id="AY587007">
    <property type="protein sequence ID" value="AAX12077.1"/>
    <property type="molecule type" value="Genomic_DNA"/>
</dbReference>
<dbReference type="RefSeq" id="YP_006979.1">
    <property type="nucleotide sequence ID" value="NC_005859.1"/>
</dbReference>
<dbReference type="PDB" id="5LXK">
    <property type="method" value="NMR"/>
    <property type="chains" value="A=73-164"/>
</dbReference>
<dbReference type="PDB" id="5LXL">
    <property type="method" value="NMR"/>
    <property type="chains" value="A=2-77"/>
</dbReference>
<dbReference type="PDB" id="8ZVI">
    <property type="method" value="EM"/>
    <property type="resolution" value="3.40 A"/>
    <property type="chains" value="a/b=1-164"/>
</dbReference>
<dbReference type="PDBsum" id="5LXK"/>
<dbReference type="PDBsum" id="5LXL"/>
<dbReference type="PDBsum" id="8ZVI"/>
<dbReference type="BMRB" id="Q6QGD6"/>
<dbReference type="EMDB" id="EMD-60511"/>
<dbReference type="SMR" id="Q6QGD6"/>
<dbReference type="GeneID" id="2777675"/>
<dbReference type="KEGG" id="vg:2777675"/>
<dbReference type="Proteomes" id="UP000002107">
    <property type="component" value="Genome"/>
</dbReference>
<dbReference type="Proteomes" id="UP000002141">
    <property type="component" value="Segment"/>
</dbReference>
<dbReference type="Proteomes" id="UP000002503">
    <property type="component" value="Segment"/>
</dbReference>
<dbReference type="GO" id="GO:0098021">
    <property type="term" value="C:viral capsid, decoration"/>
    <property type="evidence" value="ECO:0000314"/>
    <property type="project" value="UniProtKB"/>
</dbReference>
<dbReference type="Gene3D" id="2.60.40.10">
    <property type="entry name" value="Immunoglobulins"/>
    <property type="match status" value="1"/>
</dbReference>
<dbReference type="InterPro" id="IPR048804">
    <property type="entry name" value="DECO_N"/>
</dbReference>
<dbReference type="InterPro" id="IPR007110">
    <property type="entry name" value="Ig-like_dom"/>
</dbReference>
<dbReference type="InterPro" id="IPR036179">
    <property type="entry name" value="Ig-like_dom_sf"/>
</dbReference>
<dbReference type="InterPro" id="IPR013783">
    <property type="entry name" value="Ig-like_fold"/>
</dbReference>
<dbReference type="Pfam" id="PF13927">
    <property type="entry name" value="Ig_3"/>
    <property type="match status" value="1"/>
</dbReference>
<dbReference type="Pfam" id="PF21393">
    <property type="entry name" value="Phage_pb10_N"/>
    <property type="match status" value="1"/>
</dbReference>
<dbReference type="SUPFAM" id="SSF48726">
    <property type="entry name" value="Immunoglobulin"/>
    <property type="match status" value="1"/>
</dbReference>
<dbReference type="PROSITE" id="PS50835">
    <property type="entry name" value="IG_LIKE"/>
    <property type="match status" value="1"/>
</dbReference>
<comment type="function">
    <text evidence="2 4 5">Decoration protein that binds asymmetrically to the center of each capsid protein hexamer after capsid expansion. Stabilizes the capsid and protects from DNA release.</text>
</comment>
<comment type="subunit">
    <text evidence="4 5">Interacts with the major capsid protein; each hexon binds a single copy of the decoration protein.</text>
</comment>
<comment type="subcellular location">
    <subcellularLocation>
        <location evidence="2 3">Virion</location>
    </subcellularLocation>
    <text evidence="2">120 copies of the decoration protein are localized on the exterior of the capsid.</text>
</comment>
<comment type="domain">
    <text evidence="5">The N-terminus binds to the capsid proteins with high affinity and high cooperativity while the C-terminus displays an IG-like fold.</text>
</comment>
<name>DECO_BPT5</name>
<feature type="chain" id="PRO_0000435555" description="Decoration protein">
    <location>
        <begin position="1"/>
        <end position="164"/>
    </location>
</feature>
<feature type="domain" description="Ig-like" evidence="1 5">
    <location>
        <begin position="71"/>
        <end position="164"/>
    </location>
</feature>
<feature type="region of interest" description="Binding to the capsid hexamer" evidence="5">
    <location>
        <begin position="1"/>
        <end position="72"/>
    </location>
</feature>
<feature type="strand" evidence="11">
    <location>
        <begin position="2"/>
        <end position="4"/>
    </location>
</feature>
<feature type="helix" evidence="11">
    <location>
        <begin position="5"/>
        <end position="10"/>
    </location>
</feature>
<feature type="helix" evidence="11">
    <location>
        <begin position="18"/>
        <end position="23"/>
    </location>
</feature>
<feature type="helix" evidence="11">
    <location>
        <begin position="25"/>
        <end position="28"/>
    </location>
</feature>
<feature type="helix" evidence="11">
    <location>
        <begin position="34"/>
        <end position="40"/>
    </location>
</feature>
<feature type="strand" evidence="11">
    <location>
        <begin position="41"/>
        <end position="43"/>
    </location>
</feature>
<feature type="helix" evidence="11">
    <location>
        <begin position="45"/>
        <end position="47"/>
    </location>
</feature>
<feature type="helix" evidence="11">
    <location>
        <begin position="49"/>
        <end position="59"/>
    </location>
</feature>
<feature type="strand" evidence="10">
    <location>
        <begin position="75"/>
        <end position="77"/>
    </location>
</feature>
<feature type="strand" evidence="10">
    <location>
        <begin position="82"/>
        <end position="87"/>
    </location>
</feature>
<feature type="strand" evidence="10">
    <location>
        <begin position="89"/>
        <end position="94"/>
    </location>
</feature>
<feature type="strand" evidence="10">
    <location>
        <begin position="97"/>
        <end position="111"/>
    </location>
</feature>
<feature type="strand" evidence="10">
    <location>
        <begin position="120"/>
        <end position="128"/>
    </location>
</feature>
<feature type="helix" evidence="10">
    <location>
        <begin position="130"/>
        <end position="132"/>
    </location>
</feature>
<feature type="strand" evidence="10">
    <location>
        <begin position="134"/>
        <end position="142"/>
    </location>
</feature>
<feature type="turn" evidence="10">
    <location>
        <begin position="143"/>
        <end position="145"/>
    </location>
</feature>
<feature type="strand" evidence="10">
    <location>
        <begin position="146"/>
        <end position="160"/>
    </location>
</feature>
<organismHost>
    <name type="scientific">Escherichia coli</name>
    <dbReference type="NCBI Taxonomy" id="562"/>
</organismHost>
<protein>
    <recommendedName>
        <fullName evidence="6">Decoration protein</fullName>
    </recommendedName>
    <alternativeName>
        <fullName>Capsid protein pb10</fullName>
    </alternativeName>
</protein>